<keyword id="KW-0963">Cytoplasm</keyword>
<keyword id="KW-0488">Methylation</keyword>
<keyword id="KW-0648">Protein biosynthesis</keyword>
<keyword id="KW-1185">Reference proteome</keyword>
<protein>
    <recommendedName>
        <fullName evidence="1">Peptide chain release factor 2</fullName>
        <shortName evidence="1">RF-2</shortName>
    </recommendedName>
</protein>
<accession>Q5E7P9</accession>
<gene>
    <name evidence="1" type="primary">prfB</name>
    <name type="ordered locus">VF_0452</name>
</gene>
<proteinExistence type="inferred from homology"/>
<feature type="chain" id="PRO_1000093561" description="Peptide chain release factor 2">
    <location>
        <begin position="1"/>
        <end position="365"/>
    </location>
</feature>
<feature type="modified residue" description="N5-methylglutamine" evidence="1">
    <location>
        <position position="252"/>
    </location>
</feature>
<organism>
    <name type="scientific">Aliivibrio fischeri (strain ATCC 700601 / ES114)</name>
    <name type="common">Vibrio fischeri</name>
    <dbReference type="NCBI Taxonomy" id="312309"/>
    <lineage>
        <taxon>Bacteria</taxon>
        <taxon>Pseudomonadati</taxon>
        <taxon>Pseudomonadota</taxon>
        <taxon>Gammaproteobacteria</taxon>
        <taxon>Vibrionales</taxon>
        <taxon>Vibrionaceae</taxon>
        <taxon>Aliivibrio</taxon>
    </lineage>
</organism>
<comment type="function">
    <text evidence="1">Peptide chain release factor 2 directs the termination of translation in response to the peptide chain termination codons UGA and UAA.</text>
</comment>
<comment type="subcellular location">
    <subcellularLocation>
        <location evidence="1">Cytoplasm</location>
    </subcellularLocation>
</comment>
<comment type="PTM">
    <text evidence="1">Methylated by PrmC. Methylation increases the termination efficiency of RF2.</text>
</comment>
<comment type="similarity">
    <text evidence="1">Belongs to the prokaryotic/mitochondrial release factor family.</text>
</comment>
<evidence type="ECO:0000255" key="1">
    <source>
        <dbReference type="HAMAP-Rule" id="MF_00094"/>
    </source>
</evidence>
<name>RF2_ALIF1</name>
<sequence length="365" mass="41291">MFEINPIKNRLQDVSERTNILRGYLDYDAKKERLEEVNAELEQPDVWNEPERAQALGKERASLEAVVETIDLLDQGVEDVDGLLELAVEEEDQETFDEIEPELAELEAKLAKLEFRRMFSGDHDASDCYIDLQSGSGGTEAQDWTSMMLRMYLRWAEAKGFKVEVIEVSEGEVAGLKGATVRIAGEYAYGWLRTETGVHRLVRKSPFDSSGRRHTSFASAFIYPEIDDNIQIDINPSDLRIDVYRASGAGGQHVNTTESAVRITHVPTNIVVQCQNDRSQHKNKDQAMKQLRAKLFEYELQKQNAEKQANEDAKSDIGWGSQIRSYVLDDSRIKDLRTGIENRNTQAVLDGDLDKFIEASLKSGL</sequence>
<dbReference type="EMBL" id="CP000020">
    <property type="protein sequence ID" value="AAW84947.2"/>
    <property type="molecule type" value="Genomic_DNA"/>
</dbReference>
<dbReference type="RefSeq" id="WP_011261232.1">
    <property type="nucleotide sequence ID" value="NZ_CAWLES010000001.1"/>
</dbReference>
<dbReference type="RefSeq" id="YP_203835.2">
    <property type="nucleotide sequence ID" value="NC_006840.2"/>
</dbReference>
<dbReference type="SMR" id="Q5E7P9"/>
<dbReference type="STRING" id="312309.VF_0452"/>
<dbReference type="EnsemblBacteria" id="AAW84947">
    <property type="protein sequence ID" value="AAW84947"/>
    <property type="gene ID" value="VF_0452"/>
</dbReference>
<dbReference type="GeneID" id="54163088"/>
<dbReference type="KEGG" id="vfi:VF_0452"/>
<dbReference type="PATRIC" id="fig|312309.11.peg.442"/>
<dbReference type="eggNOG" id="COG1186">
    <property type="taxonomic scope" value="Bacteria"/>
</dbReference>
<dbReference type="HOGENOM" id="CLU_220733_1_0_6"/>
<dbReference type="OrthoDB" id="9806673at2"/>
<dbReference type="Proteomes" id="UP000000537">
    <property type="component" value="Chromosome I"/>
</dbReference>
<dbReference type="GO" id="GO:0005737">
    <property type="term" value="C:cytoplasm"/>
    <property type="evidence" value="ECO:0007669"/>
    <property type="project" value="UniProtKB-SubCell"/>
</dbReference>
<dbReference type="GO" id="GO:0016149">
    <property type="term" value="F:translation release factor activity, codon specific"/>
    <property type="evidence" value="ECO:0007669"/>
    <property type="project" value="UniProtKB-UniRule"/>
</dbReference>
<dbReference type="FunFam" id="3.30.160.20:FF:000010">
    <property type="entry name" value="Peptide chain release factor 2"/>
    <property type="match status" value="1"/>
</dbReference>
<dbReference type="Gene3D" id="3.30.160.20">
    <property type="match status" value="1"/>
</dbReference>
<dbReference type="Gene3D" id="3.30.70.1660">
    <property type="match status" value="1"/>
</dbReference>
<dbReference type="Gene3D" id="1.20.58.410">
    <property type="entry name" value="Release factor"/>
    <property type="match status" value="1"/>
</dbReference>
<dbReference type="HAMAP" id="MF_00094">
    <property type="entry name" value="Rel_fac_2"/>
    <property type="match status" value="1"/>
</dbReference>
<dbReference type="InterPro" id="IPR005139">
    <property type="entry name" value="PCRF"/>
</dbReference>
<dbReference type="InterPro" id="IPR000352">
    <property type="entry name" value="Pep_chain_release_fac_I"/>
</dbReference>
<dbReference type="InterPro" id="IPR045853">
    <property type="entry name" value="Pep_chain_release_fac_I_sf"/>
</dbReference>
<dbReference type="InterPro" id="IPR004374">
    <property type="entry name" value="PrfB"/>
</dbReference>
<dbReference type="NCBIfam" id="TIGR00020">
    <property type="entry name" value="prfB"/>
    <property type="match status" value="1"/>
</dbReference>
<dbReference type="PANTHER" id="PTHR43116:SF3">
    <property type="entry name" value="CLASS I PEPTIDE CHAIN RELEASE FACTOR"/>
    <property type="match status" value="1"/>
</dbReference>
<dbReference type="PANTHER" id="PTHR43116">
    <property type="entry name" value="PEPTIDE CHAIN RELEASE FACTOR 2"/>
    <property type="match status" value="1"/>
</dbReference>
<dbReference type="Pfam" id="PF03462">
    <property type="entry name" value="PCRF"/>
    <property type="match status" value="1"/>
</dbReference>
<dbReference type="Pfam" id="PF00472">
    <property type="entry name" value="RF-1"/>
    <property type="match status" value="1"/>
</dbReference>
<dbReference type="SMART" id="SM00937">
    <property type="entry name" value="PCRF"/>
    <property type="match status" value="1"/>
</dbReference>
<dbReference type="SUPFAM" id="SSF75620">
    <property type="entry name" value="Release factor"/>
    <property type="match status" value="1"/>
</dbReference>
<dbReference type="PROSITE" id="PS00745">
    <property type="entry name" value="RF_PROK_I"/>
    <property type="match status" value="1"/>
</dbReference>
<reference key="1">
    <citation type="journal article" date="2005" name="Proc. Natl. Acad. Sci. U.S.A.">
        <title>Complete genome sequence of Vibrio fischeri: a symbiotic bacterium with pathogenic congeners.</title>
        <authorList>
            <person name="Ruby E.G."/>
            <person name="Urbanowski M."/>
            <person name="Campbell J."/>
            <person name="Dunn A."/>
            <person name="Faini M."/>
            <person name="Gunsalus R."/>
            <person name="Lostroh P."/>
            <person name="Lupp C."/>
            <person name="McCann J."/>
            <person name="Millikan D."/>
            <person name="Schaefer A."/>
            <person name="Stabb E."/>
            <person name="Stevens A."/>
            <person name="Visick K."/>
            <person name="Whistler C."/>
            <person name="Greenberg E.P."/>
        </authorList>
    </citation>
    <scope>NUCLEOTIDE SEQUENCE [LARGE SCALE GENOMIC DNA]</scope>
    <source>
        <strain>ATCC 700601 / ES114</strain>
    </source>
</reference>